<feature type="chain" id="PRO_1000070144" description="Membrane protein insertase YidC">
    <location>
        <begin position="1"/>
        <end position="560"/>
    </location>
</feature>
<feature type="transmembrane region" description="Helical" evidence="1">
    <location>
        <begin position="7"/>
        <end position="27"/>
    </location>
</feature>
<feature type="transmembrane region" description="Helical" evidence="1">
    <location>
        <begin position="367"/>
        <end position="387"/>
    </location>
</feature>
<feature type="transmembrane region" description="Helical" evidence="1">
    <location>
        <begin position="437"/>
        <end position="457"/>
    </location>
</feature>
<feature type="transmembrane region" description="Helical" evidence="1">
    <location>
        <begin position="468"/>
        <end position="488"/>
    </location>
</feature>
<feature type="transmembrane region" description="Helical" evidence="1">
    <location>
        <begin position="515"/>
        <end position="535"/>
    </location>
</feature>
<feature type="region of interest" description="Disordered" evidence="2">
    <location>
        <begin position="38"/>
        <end position="76"/>
    </location>
</feature>
<feature type="compositionally biased region" description="Polar residues" evidence="2">
    <location>
        <begin position="38"/>
        <end position="56"/>
    </location>
</feature>
<accession>Q3K428</accession>
<dbReference type="EMBL" id="CP000094">
    <property type="protein sequence ID" value="ABA77476.1"/>
    <property type="molecule type" value="Genomic_DNA"/>
</dbReference>
<dbReference type="RefSeq" id="WP_011336724.1">
    <property type="nucleotide sequence ID" value="NC_007492.2"/>
</dbReference>
<dbReference type="SMR" id="Q3K428"/>
<dbReference type="KEGG" id="pfo:Pfl01_5743"/>
<dbReference type="eggNOG" id="COG0706">
    <property type="taxonomic scope" value="Bacteria"/>
</dbReference>
<dbReference type="HOGENOM" id="CLU_016535_3_0_6"/>
<dbReference type="Proteomes" id="UP000002704">
    <property type="component" value="Chromosome"/>
</dbReference>
<dbReference type="GO" id="GO:0005886">
    <property type="term" value="C:plasma membrane"/>
    <property type="evidence" value="ECO:0007669"/>
    <property type="project" value="UniProtKB-SubCell"/>
</dbReference>
<dbReference type="GO" id="GO:0032977">
    <property type="term" value="F:membrane insertase activity"/>
    <property type="evidence" value="ECO:0007669"/>
    <property type="project" value="InterPro"/>
</dbReference>
<dbReference type="GO" id="GO:0051205">
    <property type="term" value="P:protein insertion into membrane"/>
    <property type="evidence" value="ECO:0007669"/>
    <property type="project" value="TreeGrafter"/>
</dbReference>
<dbReference type="GO" id="GO:0015031">
    <property type="term" value="P:protein transport"/>
    <property type="evidence" value="ECO:0007669"/>
    <property type="project" value="UniProtKB-KW"/>
</dbReference>
<dbReference type="CDD" id="cd20070">
    <property type="entry name" value="5TM_YidC_Alb3"/>
    <property type="match status" value="1"/>
</dbReference>
<dbReference type="CDD" id="cd19961">
    <property type="entry name" value="EcYidC-like_peri"/>
    <property type="match status" value="1"/>
</dbReference>
<dbReference type="Gene3D" id="2.70.98.90">
    <property type="match status" value="1"/>
</dbReference>
<dbReference type="HAMAP" id="MF_01810">
    <property type="entry name" value="YidC_type1"/>
    <property type="match status" value="1"/>
</dbReference>
<dbReference type="InterPro" id="IPR019998">
    <property type="entry name" value="Membr_insert_YidC"/>
</dbReference>
<dbReference type="InterPro" id="IPR028053">
    <property type="entry name" value="Membr_insert_YidC_N"/>
</dbReference>
<dbReference type="InterPro" id="IPR001708">
    <property type="entry name" value="YidC/ALB3/OXA1/COX18"/>
</dbReference>
<dbReference type="InterPro" id="IPR028055">
    <property type="entry name" value="YidC/Oxa/ALB_C"/>
</dbReference>
<dbReference type="InterPro" id="IPR047196">
    <property type="entry name" value="YidC_ALB_C"/>
</dbReference>
<dbReference type="InterPro" id="IPR038221">
    <property type="entry name" value="YidC_periplasmic_sf"/>
</dbReference>
<dbReference type="NCBIfam" id="NF002352">
    <property type="entry name" value="PRK01318.1-3"/>
    <property type="match status" value="1"/>
</dbReference>
<dbReference type="NCBIfam" id="NF002353">
    <property type="entry name" value="PRK01318.1-4"/>
    <property type="match status" value="1"/>
</dbReference>
<dbReference type="NCBIfam" id="TIGR03593">
    <property type="entry name" value="yidC_nterm"/>
    <property type="match status" value="1"/>
</dbReference>
<dbReference type="NCBIfam" id="TIGR03592">
    <property type="entry name" value="yidC_oxa1_cterm"/>
    <property type="match status" value="1"/>
</dbReference>
<dbReference type="PANTHER" id="PTHR12428:SF65">
    <property type="entry name" value="CYTOCHROME C OXIDASE ASSEMBLY PROTEIN COX18, MITOCHONDRIAL"/>
    <property type="match status" value="1"/>
</dbReference>
<dbReference type="PANTHER" id="PTHR12428">
    <property type="entry name" value="OXA1"/>
    <property type="match status" value="1"/>
</dbReference>
<dbReference type="Pfam" id="PF02096">
    <property type="entry name" value="60KD_IMP"/>
    <property type="match status" value="1"/>
</dbReference>
<dbReference type="Pfam" id="PF14849">
    <property type="entry name" value="YidC_periplas"/>
    <property type="match status" value="1"/>
</dbReference>
<dbReference type="PRINTS" id="PR00701">
    <property type="entry name" value="60KDINNERMP"/>
</dbReference>
<dbReference type="PRINTS" id="PR01900">
    <property type="entry name" value="YIDCPROTEIN"/>
</dbReference>
<organism>
    <name type="scientific">Pseudomonas fluorescens (strain Pf0-1)</name>
    <dbReference type="NCBI Taxonomy" id="205922"/>
    <lineage>
        <taxon>Bacteria</taxon>
        <taxon>Pseudomonadati</taxon>
        <taxon>Pseudomonadota</taxon>
        <taxon>Gammaproteobacteria</taxon>
        <taxon>Pseudomonadales</taxon>
        <taxon>Pseudomonadaceae</taxon>
        <taxon>Pseudomonas</taxon>
    </lineage>
</organism>
<keyword id="KW-0997">Cell inner membrane</keyword>
<keyword id="KW-1003">Cell membrane</keyword>
<keyword id="KW-0143">Chaperone</keyword>
<keyword id="KW-0472">Membrane</keyword>
<keyword id="KW-0653">Protein transport</keyword>
<keyword id="KW-0812">Transmembrane</keyword>
<keyword id="KW-1133">Transmembrane helix</keyword>
<keyword id="KW-0813">Transport</keyword>
<sequence length="560" mass="61956">MDIKRTILIVALAIVSYVMVLKWNQDYGQAALPTQNVASSTTTSGLPDTATGNNAAASDDIPRAASDTSAPAETPVAASKDLIQIKTDVLDLSIDPQGGDVAQLTLPLYPRRQDRPDVPFQLFDNGGERTYLAQSGLIGTNGPDANPAGRPIYSSEKKTYQLADGQDKLVVDLKFSKDGVNYIKRFTLKRGLYDVTVTYLIDNQSAQPWSGSMFAQLKRDASADPSSTTATGTATYLGAALWTSSEPYKKVSMKDMDKAQLKETVTGGWVAWLQHYFVTAWVAPKGENNIVQTRKDSKGNYIIGYTGPSLTAAPGAKVETSAVLYAGPKSQAVLKELSPGLELTVDYGILWFIAQPIFWLLQHIHSIVGNWGWSIIFLTMLIKGIFFPLSAASYKSMARMRAVAPKLAALKEQHGDDRQKMSQAMMELYKKEKINPLGGCLPILVQMPVFLSLYWVLLESVEMRQAPFMLWITDLSIKDPFFILPIIMGATMFIQQRLNPTPPDPMQAKVMKMMPIIFTFFFLWFPAGLVLYWVVNNCLSIAQQWYITRKIEAATKKAEA</sequence>
<comment type="function">
    <text evidence="1">Required for the insertion and/or proper folding and/or complex formation of integral membrane proteins into the membrane. Involved in integration of membrane proteins that insert both dependently and independently of the Sec translocase complex, as well as at least some lipoproteins. Aids folding of multispanning membrane proteins.</text>
</comment>
<comment type="subunit">
    <text evidence="1">Interacts with the Sec translocase complex via SecD. Specifically interacts with transmembrane segments of nascent integral membrane proteins during membrane integration.</text>
</comment>
<comment type="subcellular location">
    <subcellularLocation>
        <location evidence="1">Cell inner membrane</location>
        <topology evidence="1">Multi-pass membrane protein</topology>
    </subcellularLocation>
</comment>
<comment type="similarity">
    <text evidence="1">Belongs to the OXA1/ALB3/YidC family. Type 1 subfamily.</text>
</comment>
<evidence type="ECO:0000255" key="1">
    <source>
        <dbReference type="HAMAP-Rule" id="MF_01810"/>
    </source>
</evidence>
<evidence type="ECO:0000256" key="2">
    <source>
        <dbReference type="SAM" id="MobiDB-lite"/>
    </source>
</evidence>
<reference key="1">
    <citation type="journal article" date="2009" name="Genome Biol.">
        <title>Genomic and genetic analyses of diversity and plant interactions of Pseudomonas fluorescens.</title>
        <authorList>
            <person name="Silby M.W."/>
            <person name="Cerdeno-Tarraga A.M."/>
            <person name="Vernikos G.S."/>
            <person name="Giddens S.R."/>
            <person name="Jackson R.W."/>
            <person name="Preston G.M."/>
            <person name="Zhang X.-X."/>
            <person name="Moon C.D."/>
            <person name="Gehrig S.M."/>
            <person name="Godfrey S.A.C."/>
            <person name="Knight C.G."/>
            <person name="Malone J.G."/>
            <person name="Robinson Z."/>
            <person name="Spiers A.J."/>
            <person name="Harris S."/>
            <person name="Challis G.L."/>
            <person name="Yaxley A.M."/>
            <person name="Harris D."/>
            <person name="Seeger K."/>
            <person name="Murphy L."/>
            <person name="Rutter S."/>
            <person name="Squares R."/>
            <person name="Quail M.A."/>
            <person name="Saunders E."/>
            <person name="Mavromatis K."/>
            <person name="Brettin T.S."/>
            <person name="Bentley S.D."/>
            <person name="Hothersall J."/>
            <person name="Stephens E."/>
            <person name="Thomas C.M."/>
            <person name="Parkhill J."/>
            <person name="Levy S.B."/>
            <person name="Rainey P.B."/>
            <person name="Thomson N.R."/>
        </authorList>
    </citation>
    <scope>NUCLEOTIDE SEQUENCE [LARGE SCALE GENOMIC DNA]</scope>
    <source>
        <strain>Pf0-1</strain>
    </source>
</reference>
<gene>
    <name evidence="1" type="primary">yidC</name>
    <name type="ordered locus">Pfl01_5743</name>
</gene>
<proteinExistence type="inferred from homology"/>
<protein>
    <recommendedName>
        <fullName evidence="1">Membrane protein insertase YidC</fullName>
    </recommendedName>
    <alternativeName>
        <fullName evidence="1">Foldase YidC</fullName>
    </alternativeName>
    <alternativeName>
        <fullName evidence="1">Membrane integrase YidC</fullName>
    </alternativeName>
    <alternativeName>
        <fullName evidence="1">Membrane protein YidC</fullName>
    </alternativeName>
</protein>
<name>YIDC_PSEPF</name>